<sequence length="249" mass="29809">MTKRLSSKQKVYTQTGINIWGKGPFLWKNNTKDKWKNTPGEHKKKHKLLERYSPMIRGDSINEMNQLGYLIPKSKNEVKISYYEPRYASQLKEKQKLRKFYANVTEKQFYNYYVKAKSFKGKIGDNLIKMLERRLDIIIYRAGFVNSIYQARLLVNHKHVLVNNKIQNISSYLVQNGDMISIKPEIVNLLRNQYNWDILQKSNGSFLKYLPYLEVDYKTMSCIYLYTPEMNEIYFPFQLDMNKVIRYYV</sequence>
<dbReference type="EMBL" id="AF007261">
    <property type="protein sequence ID" value="AAD11890.1"/>
    <property type="molecule type" value="Genomic_DNA"/>
</dbReference>
<dbReference type="PIR" id="S78157">
    <property type="entry name" value="S78157"/>
</dbReference>
<dbReference type="RefSeq" id="NP_044775.1">
    <property type="nucleotide sequence ID" value="NC_001823.1"/>
</dbReference>
<dbReference type="SMR" id="O21263"/>
<dbReference type="GeneID" id="801133"/>
<dbReference type="GO" id="GO:0005739">
    <property type="term" value="C:mitochondrion"/>
    <property type="evidence" value="ECO:0007669"/>
    <property type="project" value="UniProtKB-SubCell"/>
</dbReference>
<dbReference type="GO" id="GO:0015935">
    <property type="term" value="C:small ribosomal subunit"/>
    <property type="evidence" value="ECO:0007669"/>
    <property type="project" value="TreeGrafter"/>
</dbReference>
<dbReference type="GO" id="GO:0019843">
    <property type="term" value="F:rRNA binding"/>
    <property type="evidence" value="ECO:0007669"/>
    <property type="project" value="UniProtKB-KW"/>
</dbReference>
<dbReference type="GO" id="GO:0003735">
    <property type="term" value="F:structural constituent of ribosome"/>
    <property type="evidence" value="ECO:0007669"/>
    <property type="project" value="TreeGrafter"/>
</dbReference>
<dbReference type="GO" id="GO:0042274">
    <property type="term" value="P:ribosomal small subunit biogenesis"/>
    <property type="evidence" value="ECO:0007669"/>
    <property type="project" value="TreeGrafter"/>
</dbReference>
<dbReference type="CDD" id="cd00165">
    <property type="entry name" value="S4"/>
    <property type="match status" value="1"/>
</dbReference>
<dbReference type="Gene3D" id="1.10.1050.10">
    <property type="entry name" value="Ribosomal Protein S4 Delta 41, Chain A, domain 1"/>
    <property type="match status" value="1"/>
</dbReference>
<dbReference type="Gene3D" id="3.10.290.10">
    <property type="entry name" value="RNA-binding S4 domain"/>
    <property type="match status" value="1"/>
</dbReference>
<dbReference type="InterPro" id="IPR022801">
    <property type="entry name" value="Ribosomal_uS4"/>
</dbReference>
<dbReference type="InterPro" id="IPR018079">
    <property type="entry name" value="Ribosomal_uS4_CS"/>
</dbReference>
<dbReference type="InterPro" id="IPR001912">
    <property type="entry name" value="Ribosomal_uS4_N"/>
</dbReference>
<dbReference type="InterPro" id="IPR002942">
    <property type="entry name" value="S4_RNA-bd"/>
</dbReference>
<dbReference type="InterPro" id="IPR036986">
    <property type="entry name" value="S4_RNA-bd_sf"/>
</dbReference>
<dbReference type="NCBIfam" id="NF003717">
    <property type="entry name" value="PRK05327.1"/>
    <property type="match status" value="1"/>
</dbReference>
<dbReference type="PANTHER" id="PTHR11831">
    <property type="entry name" value="30S 40S RIBOSOMAL PROTEIN"/>
    <property type="match status" value="1"/>
</dbReference>
<dbReference type="PANTHER" id="PTHR11831:SF4">
    <property type="entry name" value="SMALL RIBOSOMAL SUBUNIT PROTEIN US4M"/>
    <property type="match status" value="1"/>
</dbReference>
<dbReference type="Pfam" id="PF00163">
    <property type="entry name" value="Ribosomal_S4"/>
    <property type="match status" value="1"/>
</dbReference>
<dbReference type="Pfam" id="PF01479">
    <property type="entry name" value="S4"/>
    <property type="match status" value="1"/>
</dbReference>
<dbReference type="SMART" id="SM01390">
    <property type="entry name" value="Ribosomal_S4"/>
    <property type="match status" value="1"/>
</dbReference>
<dbReference type="SMART" id="SM00363">
    <property type="entry name" value="S4"/>
    <property type="match status" value="1"/>
</dbReference>
<dbReference type="SUPFAM" id="SSF55174">
    <property type="entry name" value="Alpha-L RNA-binding motif"/>
    <property type="match status" value="1"/>
</dbReference>
<dbReference type="PROSITE" id="PS00632">
    <property type="entry name" value="RIBOSOMAL_S4"/>
    <property type="match status" value="1"/>
</dbReference>
<dbReference type="PROSITE" id="PS50889">
    <property type="entry name" value="S4"/>
    <property type="match status" value="1"/>
</dbReference>
<feature type="chain" id="PRO_0000132688" description="Small ribosomal subunit protein uS4m">
    <location>
        <begin position="1"/>
        <end position="249"/>
    </location>
</feature>
<feature type="domain" description="S4 RNA-binding" evidence="1">
    <location>
        <begin position="133"/>
        <end position="193"/>
    </location>
</feature>
<reference key="1">
    <citation type="journal article" date="1997" name="Nature">
        <title>An ancestral mitochondrial DNA resembling a eubacterial genome in miniature.</title>
        <authorList>
            <person name="Lang B.F."/>
            <person name="Burger G."/>
            <person name="O'Kelly C.J."/>
            <person name="Cedergren R."/>
            <person name="Golding G.B."/>
            <person name="Lemieux C."/>
            <person name="Sankoff D."/>
            <person name="Turmel M."/>
            <person name="Gray M.W."/>
        </authorList>
    </citation>
    <scope>NUCLEOTIDE SEQUENCE [GENOMIC DNA]</scope>
    <source>
        <strain>ATCC 50394</strain>
    </source>
</reference>
<geneLocation type="mitochondrion"/>
<gene>
    <name type="primary">RPS4</name>
</gene>
<name>RT04_RECAM</name>
<proteinExistence type="inferred from homology"/>
<protein>
    <recommendedName>
        <fullName evidence="2">Small ribosomal subunit protein uS4m</fullName>
    </recommendedName>
    <alternativeName>
        <fullName>Ribosomal protein S4, mitochondrial</fullName>
    </alternativeName>
</protein>
<organism>
    <name type="scientific">Reclinomonas americana</name>
    <dbReference type="NCBI Taxonomy" id="48483"/>
    <lineage>
        <taxon>Eukaryota</taxon>
        <taxon>Discoba</taxon>
        <taxon>Jakobida</taxon>
        <taxon>Histionina</taxon>
        <taxon>Histionidae</taxon>
        <taxon>Reclinomonas</taxon>
    </lineage>
</organism>
<evidence type="ECO:0000255" key="1">
    <source>
        <dbReference type="PROSITE-ProRule" id="PRU00182"/>
    </source>
</evidence>
<evidence type="ECO:0000305" key="2"/>
<comment type="subcellular location">
    <subcellularLocation>
        <location>Mitochondrion</location>
    </subcellularLocation>
</comment>
<comment type="similarity">
    <text evidence="2">Belongs to the universal ribosomal protein uS4 family.</text>
</comment>
<keyword id="KW-0496">Mitochondrion</keyword>
<keyword id="KW-0687">Ribonucleoprotein</keyword>
<keyword id="KW-0689">Ribosomal protein</keyword>
<keyword id="KW-0694">RNA-binding</keyword>
<keyword id="KW-0699">rRNA-binding</keyword>
<accession>O21263</accession>